<gene>
    <name evidence="1" type="primary">cyoE</name>
    <name type="ordered locus">YPK_3245</name>
</gene>
<sequence length="295" mass="32047">MIKQYLQVTKPGIIFGNLISVIGGFLLASKGDIDYPLFLSTLLGVSLVVASGCVFNNYIDRDIDKIMERTKNRVLVKGLIDPKVSLIYASVLGIAGMLLLYVAANALAMMLAVIGFVIYVGVYSLYMKRKSVYGTLIGSLSGAAPPVIGYCAVTGQFDTGALILLLIFSLWQMPHSYAIAIFRFKDYQAANIPVLPVIKGISVTKNHITLYILAFMVATLMLTLSGYAGYKYLVVAAAVSVWWLGMALRGYKATNDSVWARKLFVFSIIAITSLSVMMSVDFNVHSSAVLLTYAG</sequence>
<reference key="1">
    <citation type="submission" date="2008-02" db="EMBL/GenBank/DDBJ databases">
        <title>Complete sequence of Yersinia pseudotuberculosis YPIII.</title>
        <authorList>
            <consortium name="US DOE Joint Genome Institute"/>
            <person name="Copeland A."/>
            <person name="Lucas S."/>
            <person name="Lapidus A."/>
            <person name="Glavina del Rio T."/>
            <person name="Dalin E."/>
            <person name="Tice H."/>
            <person name="Bruce D."/>
            <person name="Goodwin L."/>
            <person name="Pitluck S."/>
            <person name="Munk A.C."/>
            <person name="Brettin T."/>
            <person name="Detter J.C."/>
            <person name="Han C."/>
            <person name="Tapia R."/>
            <person name="Schmutz J."/>
            <person name="Larimer F."/>
            <person name="Land M."/>
            <person name="Hauser L."/>
            <person name="Challacombe J.F."/>
            <person name="Green L."/>
            <person name="Lindler L.E."/>
            <person name="Nikolich M.P."/>
            <person name="Richardson P."/>
        </authorList>
    </citation>
    <scope>NUCLEOTIDE SEQUENCE [LARGE SCALE GENOMIC DNA]</scope>
    <source>
        <strain>YPIII</strain>
    </source>
</reference>
<organism>
    <name type="scientific">Yersinia pseudotuberculosis serotype O:3 (strain YPIII)</name>
    <dbReference type="NCBI Taxonomy" id="502800"/>
    <lineage>
        <taxon>Bacteria</taxon>
        <taxon>Pseudomonadati</taxon>
        <taxon>Pseudomonadota</taxon>
        <taxon>Gammaproteobacteria</taxon>
        <taxon>Enterobacterales</taxon>
        <taxon>Yersiniaceae</taxon>
        <taxon>Yersinia</taxon>
    </lineage>
</organism>
<accession>B1JHT2</accession>
<keyword id="KW-0997">Cell inner membrane</keyword>
<keyword id="KW-1003">Cell membrane</keyword>
<keyword id="KW-0350">Heme biosynthesis</keyword>
<keyword id="KW-0472">Membrane</keyword>
<keyword id="KW-0808">Transferase</keyword>
<keyword id="KW-0812">Transmembrane</keyword>
<keyword id="KW-1133">Transmembrane helix</keyword>
<name>CYOE_YERPY</name>
<evidence type="ECO:0000255" key="1">
    <source>
        <dbReference type="HAMAP-Rule" id="MF_00154"/>
    </source>
</evidence>
<comment type="function">
    <text evidence="1">Converts heme B (protoheme IX) to heme O by substitution of the vinyl group on carbon 2 of heme B porphyrin ring with a hydroxyethyl farnesyl side group.</text>
</comment>
<comment type="catalytic activity">
    <reaction evidence="1">
        <text>heme b + (2E,6E)-farnesyl diphosphate + H2O = Fe(II)-heme o + diphosphate</text>
        <dbReference type="Rhea" id="RHEA:28070"/>
        <dbReference type="ChEBI" id="CHEBI:15377"/>
        <dbReference type="ChEBI" id="CHEBI:33019"/>
        <dbReference type="ChEBI" id="CHEBI:60344"/>
        <dbReference type="ChEBI" id="CHEBI:60530"/>
        <dbReference type="ChEBI" id="CHEBI:175763"/>
        <dbReference type="EC" id="2.5.1.141"/>
    </reaction>
</comment>
<comment type="pathway">
    <text evidence="1">Porphyrin-containing compound metabolism; heme O biosynthesis; heme O from protoheme: step 1/1.</text>
</comment>
<comment type="subcellular location">
    <subcellularLocation>
        <location evidence="1">Cell inner membrane</location>
        <topology evidence="1">Multi-pass membrane protein</topology>
    </subcellularLocation>
</comment>
<comment type="miscellaneous">
    <text evidence="1">Carbon 2 of the heme B porphyrin ring is defined according to the Fischer nomenclature.</text>
</comment>
<comment type="similarity">
    <text evidence="1">Belongs to the UbiA prenyltransferase family. Protoheme IX farnesyltransferase subfamily.</text>
</comment>
<feature type="chain" id="PRO_0000346021" description="Protoheme IX farnesyltransferase">
    <location>
        <begin position="1"/>
        <end position="295"/>
    </location>
</feature>
<feature type="transmembrane region" description="Helical" evidence="1">
    <location>
        <begin position="8"/>
        <end position="28"/>
    </location>
</feature>
<feature type="transmembrane region" description="Helical" evidence="1">
    <location>
        <begin position="35"/>
        <end position="55"/>
    </location>
</feature>
<feature type="transmembrane region" description="Helical" evidence="1">
    <location>
        <begin position="74"/>
        <end position="94"/>
    </location>
</feature>
<feature type="transmembrane region" description="Helical" evidence="1">
    <location>
        <begin position="98"/>
        <end position="118"/>
    </location>
</feature>
<feature type="transmembrane region" description="Helical" evidence="1">
    <location>
        <begin position="132"/>
        <end position="152"/>
    </location>
</feature>
<feature type="transmembrane region" description="Helical" evidence="1">
    <location>
        <begin position="162"/>
        <end position="182"/>
    </location>
</feature>
<feature type="transmembrane region" description="Helical" evidence="1">
    <location>
        <begin position="208"/>
        <end position="228"/>
    </location>
</feature>
<feature type="transmembrane region" description="Helical" evidence="1">
    <location>
        <begin position="233"/>
        <end position="253"/>
    </location>
</feature>
<feature type="transmembrane region" description="Helical" evidence="1">
    <location>
        <begin position="264"/>
        <end position="284"/>
    </location>
</feature>
<dbReference type="EC" id="2.5.1.141" evidence="1"/>
<dbReference type="EMBL" id="CP000950">
    <property type="protein sequence ID" value="ACA69514.1"/>
    <property type="molecule type" value="Genomic_DNA"/>
</dbReference>
<dbReference type="RefSeq" id="WP_002208653.1">
    <property type="nucleotide sequence ID" value="NZ_CP009792.1"/>
</dbReference>
<dbReference type="SMR" id="B1JHT2"/>
<dbReference type="GeneID" id="57975544"/>
<dbReference type="KEGG" id="ypy:YPK_3245"/>
<dbReference type="PATRIC" id="fig|502800.11.peg.3973"/>
<dbReference type="UniPathway" id="UPA00834">
    <property type="reaction ID" value="UER00712"/>
</dbReference>
<dbReference type="GO" id="GO:0005886">
    <property type="term" value="C:plasma membrane"/>
    <property type="evidence" value="ECO:0007669"/>
    <property type="project" value="UniProtKB-SubCell"/>
</dbReference>
<dbReference type="GO" id="GO:0008495">
    <property type="term" value="F:protoheme IX farnesyltransferase activity"/>
    <property type="evidence" value="ECO:0007669"/>
    <property type="project" value="UniProtKB-UniRule"/>
</dbReference>
<dbReference type="GO" id="GO:0048034">
    <property type="term" value="P:heme O biosynthetic process"/>
    <property type="evidence" value="ECO:0007669"/>
    <property type="project" value="UniProtKB-UniRule"/>
</dbReference>
<dbReference type="CDD" id="cd13957">
    <property type="entry name" value="PT_UbiA_Cox10"/>
    <property type="match status" value="1"/>
</dbReference>
<dbReference type="FunFam" id="1.10.357.140:FF:000001">
    <property type="entry name" value="Protoheme IX farnesyltransferase"/>
    <property type="match status" value="1"/>
</dbReference>
<dbReference type="Gene3D" id="1.10.357.140">
    <property type="entry name" value="UbiA prenyltransferase"/>
    <property type="match status" value="1"/>
</dbReference>
<dbReference type="HAMAP" id="MF_00154">
    <property type="entry name" value="CyoE_CtaB"/>
    <property type="match status" value="1"/>
</dbReference>
<dbReference type="InterPro" id="IPR006369">
    <property type="entry name" value="Protohaem_IX_farnesylTrfase"/>
</dbReference>
<dbReference type="InterPro" id="IPR000537">
    <property type="entry name" value="UbiA_prenyltransferase"/>
</dbReference>
<dbReference type="InterPro" id="IPR030470">
    <property type="entry name" value="UbiA_prenylTrfase_CS"/>
</dbReference>
<dbReference type="InterPro" id="IPR044878">
    <property type="entry name" value="UbiA_sf"/>
</dbReference>
<dbReference type="NCBIfam" id="TIGR01473">
    <property type="entry name" value="cyoE_ctaB"/>
    <property type="match status" value="1"/>
</dbReference>
<dbReference type="NCBIfam" id="NF003348">
    <property type="entry name" value="PRK04375.1-1"/>
    <property type="match status" value="1"/>
</dbReference>
<dbReference type="PANTHER" id="PTHR43448">
    <property type="entry name" value="PROTOHEME IX FARNESYLTRANSFERASE, MITOCHONDRIAL"/>
    <property type="match status" value="1"/>
</dbReference>
<dbReference type="PANTHER" id="PTHR43448:SF2">
    <property type="entry name" value="PROTOHEME IX FARNESYLTRANSFERASE, MITOCHONDRIAL"/>
    <property type="match status" value="1"/>
</dbReference>
<dbReference type="Pfam" id="PF01040">
    <property type="entry name" value="UbiA"/>
    <property type="match status" value="1"/>
</dbReference>
<dbReference type="PROSITE" id="PS00943">
    <property type="entry name" value="UBIA"/>
    <property type="match status" value="1"/>
</dbReference>
<protein>
    <recommendedName>
        <fullName evidence="1">Protoheme IX farnesyltransferase</fullName>
        <ecNumber evidence="1">2.5.1.141</ecNumber>
    </recommendedName>
    <alternativeName>
        <fullName evidence="1">Heme B farnesyltransferase</fullName>
    </alternativeName>
    <alternativeName>
        <fullName evidence="1">Heme O synthase</fullName>
    </alternativeName>
</protein>
<proteinExistence type="inferred from homology"/>